<accession>B7MX24</accession>
<name>END4_ECO81</name>
<sequence>MKYIGAHVSAAGGLANAAIRAAEIDATAFALFTKNQRQWRAAPLTTQTIDKFKAACEKYHYTSAQILPHDSYLINLGHPVAEALEKSRDAFIDEMQRCEQLGLSLLNFHPGSHLMQISEEDCLARIAESINIALDKTQGVTAVIENSAGQGSNLGFKFEHLAAIIDGVEDKSRVGVCIDTCHAFAAGYDLRTPAECEKTFADFARIVGFKYLRGMHLNDAKSTFGSRVDRHHSLGEGNIGHDAFRWIMQDDRFDGIPLILETINPDIWAEEIAWLKAQQTEKAVA</sequence>
<keyword id="KW-0227">DNA damage</keyword>
<keyword id="KW-0234">DNA repair</keyword>
<keyword id="KW-0255">Endonuclease</keyword>
<keyword id="KW-0378">Hydrolase</keyword>
<keyword id="KW-0479">Metal-binding</keyword>
<keyword id="KW-0540">Nuclease</keyword>
<keyword id="KW-0862">Zinc</keyword>
<reference key="1">
    <citation type="journal article" date="2009" name="PLoS Genet.">
        <title>Organised genome dynamics in the Escherichia coli species results in highly diverse adaptive paths.</title>
        <authorList>
            <person name="Touchon M."/>
            <person name="Hoede C."/>
            <person name="Tenaillon O."/>
            <person name="Barbe V."/>
            <person name="Baeriswyl S."/>
            <person name="Bidet P."/>
            <person name="Bingen E."/>
            <person name="Bonacorsi S."/>
            <person name="Bouchier C."/>
            <person name="Bouvet O."/>
            <person name="Calteau A."/>
            <person name="Chiapello H."/>
            <person name="Clermont O."/>
            <person name="Cruveiller S."/>
            <person name="Danchin A."/>
            <person name="Diard M."/>
            <person name="Dossat C."/>
            <person name="Karoui M.E."/>
            <person name="Frapy E."/>
            <person name="Garry L."/>
            <person name="Ghigo J.M."/>
            <person name="Gilles A.M."/>
            <person name="Johnson J."/>
            <person name="Le Bouguenec C."/>
            <person name="Lescat M."/>
            <person name="Mangenot S."/>
            <person name="Martinez-Jehanne V."/>
            <person name="Matic I."/>
            <person name="Nassif X."/>
            <person name="Oztas S."/>
            <person name="Petit M.A."/>
            <person name="Pichon C."/>
            <person name="Rouy Z."/>
            <person name="Ruf C.S."/>
            <person name="Schneider D."/>
            <person name="Tourret J."/>
            <person name="Vacherie B."/>
            <person name="Vallenet D."/>
            <person name="Medigue C."/>
            <person name="Rocha E.P.C."/>
            <person name="Denamur E."/>
        </authorList>
    </citation>
    <scope>NUCLEOTIDE SEQUENCE [LARGE SCALE GENOMIC DNA]</scope>
    <source>
        <strain>ED1a</strain>
    </source>
</reference>
<feature type="chain" id="PRO_1000123327" description="Probable endonuclease 4">
    <location>
        <begin position="1"/>
        <end position="285"/>
    </location>
</feature>
<feature type="binding site" evidence="1">
    <location>
        <position position="69"/>
    </location>
    <ligand>
        <name>Zn(2+)</name>
        <dbReference type="ChEBI" id="CHEBI:29105"/>
        <label>1</label>
    </ligand>
</feature>
<feature type="binding site" evidence="1">
    <location>
        <position position="109"/>
    </location>
    <ligand>
        <name>Zn(2+)</name>
        <dbReference type="ChEBI" id="CHEBI:29105"/>
        <label>1</label>
    </ligand>
</feature>
<feature type="binding site" evidence="1">
    <location>
        <position position="145"/>
    </location>
    <ligand>
        <name>Zn(2+)</name>
        <dbReference type="ChEBI" id="CHEBI:29105"/>
        <label>1</label>
    </ligand>
</feature>
<feature type="binding site" evidence="1">
    <location>
        <position position="145"/>
    </location>
    <ligand>
        <name>Zn(2+)</name>
        <dbReference type="ChEBI" id="CHEBI:29105"/>
        <label>2</label>
    </ligand>
</feature>
<feature type="binding site" evidence="1">
    <location>
        <position position="179"/>
    </location>
    <ligand>
        <name>Zn(2+)</name>
        <dbReference type="ChEBI" id="CHEBI:29105"/>
        <label>2</label>
    </ligand>
</feature>
<feature type="binding site" evidence="1">
    <location>
        <position position="182"/>
    </location>
    <ligand>
        <name>Zn(2+)</name>
        <dbReference type="ChEBI" id="CHEBI:29105"/>
        <label>3</label>
    </ligand>
</feature>
<feature type="binding site" evidence="1">
    <location>
        <position position="216"/>
    </location>
    <ligand>
        <name>Zn(2+)</name>
        <dbReference type="ChEBI" id="CHEBI:29105"/>
        <label>2</label>
    </ligand>
</feature>
<feature type="binding site" evidence="1">
    <location>
        <position position="229"/>
    </location>
    <ligand>
        <name>Zn(2+)</name>
        <dbReference type="ChEBI" id="CHEBI:29105"/>
        <label>3</label>
    </ligand>
</feature>
<feature type="binding site" evidence="1">
    <location>
        <position position="231"/>
    </location>
    <ligand>
        <name>Zn(2+)</name>
        <dbReference type="ChEBI" id="CHEBI:29105"/>
        <label>3</label>
    </ligand>
</feature>
<feature type="binding site" evidence="1">
    <location>
        <position position="261"/>
    </location>
    <ligand>
        <name>Zn(2+)</name>
        <dbReference type="ChEBI" id="CHEBI:29105"/>
        <label>2</label>
    </ligand>
</feature>
<dbReference type="EC" id="3.1.21.2" evidence="1"/>
<dbReference type="EMBL" id="CU928162">
    <property type="protein sequence ID" value="CAR08640.1"/>
    <property type="molecule type" value="Genomic_DNA"/>
</dbReference>
<dbReference type="RefSeq" id="WP_000873898.1">
    <property type="nucleotide sequence ID" value="NC_011745.1"/>
</dbReference>
<dbReference type="SMR" id="B7MX24"/>
<dbReference type="KEGG" id="ecq:ECED1_2608"/>
<dbReference type="HOGENOM" id="CLU_025885_0_4_6"/>
<dbReference type="Proteomes" id="UP000000748">
    <property type="component" value="Chromosome"/>
</dbReference>
<dbReference type="GO" id="GO:0008833">
    <property type="term" value="F:deoxyribonuclease IV (phage-T4-induced) activity"/>
    <property type="evidence" value="ECO:0007669"/>
    <property type="project" value="UniProtKB-UniRule"/>
</dbReference>
<dbReference type="GO" id="GO:0003677">
    <property type="term" value="F:DNA binding"/>
    <property type="evidence" value="ECO:0007669"/>
    <property type="project" value="InterPro"/>
</dbReference>
<dbReference type="GO" id="GO:0003906">
    <property type="term" value="F:DNA-(apurinic or apyrimidinic site) endonuclease activity"/>
    <property type="evidence" value="ECO:0007669"/>
    <property type="project" value="TreeGrafter"/>
</dbReference>
<dbReference type="GO" id="GO:0008081">
    <property type="term" value="F:phosphoric diester hydrolase activity"/>
    <property type="evidence" value="ECO:0007669"/>
    <property type="project" value="TreeGrafter"/>
</dbReference>
<dbReference type="GO" id="GO:0008270">
    <property type="term" value="F:zinc ion binding"/>
    <property type="evidence" value="ECO:0007669"/>
    <property type="project" value="UniProtKB-UniRule"/>
</dbReference>
<dbReference type="GO" id="GO:0006284">
    <property type="term" value="P:base-excision repair"/>
    <property type="evidence" value="ECO:0007669"/>
    <property type="project" value="TreeGrafter"/>
</dbReference>
<dbReference type="CDD" id="cd00019">
    <property type="entry name" value="AP2Ec"/>
    <property type="match status" value="1"/>
</dbReference>
<dbReference type="FunFam" id="3.20.20.150:FF:000001">
    <property type="entry name" value="Probable endonuclease 4"/>
    <property type="match status" value="1"/>
</dbReference>
<dbReference type="Gene3D" id="3.20.20.150">
    <property type="entry name" value="Divalent-metal-dependent TIM barrel enzymes"/>
    <property type="match status" value="1"/>
</dbReference>
<dbReference type="HAMAP" id="MF_00152">
    <property type="entry name" value="Nfo"/>
    <property type="match status" value="1"/>
</dbReference>
<dbReference type="InterPro" id="IPR001719">
    <property type="entry name" value="AP_endonuc_2"/>
</dbReference>
<dbReference type="InterPro" id="IPR018246">
    <property type="entry name" value="AP_endonuc_F2_Zn_BS"/>
</dbReference>
<dbReference type="InterPro" id="IPR036237">
    <property type="entry name" value="Xyl_isomerase-like_sf"/>
</dbReference>
<dbReference type="InterPro" id="IPR013022">
    <property type="entry name" value="Xyl_isomerase-like_TIM-brl"/>
</dbReference>
<dbReference type="NCBIfam" id="TIGR00587">
    <property type="entry name" value="nfo"/>
    <property type="match status" value="1"/>
</dbReference>
<dbReference type="NCBIfam" id="NF002199">
    <property type="entry name" value="PRK01060.1-4"/>
    <property type="match status" value="1"/>
</dbReference>
<dbReference type="PANTHER" id="PTHR21445:SF0">
    <property type="entry name" value="APURINIC-APYRIMIDINIC ENDONUCLEASE"/>
    <property type="match status" value="1"/>
</dbReference>
<dbReference type="PANTHER" id="PTHR21445">
    <property type="entry name" value="ENDONUCLEASE IV ENDODEOXYRIBONUCLEASE IV"/>
    <property type="match status" value="1"/>
</dbReference>
<dbReference type="Pfam" id="PF01261">
    <property type="entry name" value="AP_endonuc_2"/>
    <property type="match status" value="1"/>
</dbReference>
<dbReference type="SMART" id="SM00518">
    <property type="entry name" value="AP2Ec"/>
    <property type="match status" value="1"/>
</dbReference>
<dbReference type="SUPFAM" id="SSF51658">
    <property type="entry name" value="Xylose isomerase-like"/>
    <property type="match status" value="1"/>
</dbReference>
<dbReference type="PROSITE" id="PS00729">
    <property type="entry name" value="AP_NUCLEASE_F2_1"/>
    <property type="match status" value="1"/>
</dbReference>
<dbReference type="PROSITE" id="PS00730">
    <property type="entry name" value="AP_NUCLEASE_F2_2"/>
    <property type="match status" value="1"/>
</dbReference>
<dbReference type="PROSITE" id="PS00731">
    <property type="entry name" value="AP_NUCLEASE_F2_3"/>
    <property type="match status" value="1"/>
</dbReference>
<dbReference type="PROSITE" id="PS51432">
    <property type="entry name" value="AP_NUCLEASE_F2_4"/>
    <property type="match status" value="1"/>
</dbReference>
<organism>
    <name type="scientific">Escherichia coli O81 (strain ED1a)</name>
    <dbReference type="NCBI Taxonomy" id="585397"/>
    <lineage>
        <taxon>Bacteria</taxon>
        <taxon>Pseudomonadati</taxon>
        <taxon>Pseudomonadota</taxon>
        <taxon>Gammaproteobacteria</taxon>
        <taxon>Enterobacterales</taxon>
        <taxon>Enterobacteriaceae</taxon>
        <taxon>Escherichia</taxon>
    </lineage>
</organism>
<comment type="function">
    <text evidence="1">Endonuclease IV plays a role in DNA repair. It cleaves phosphodiester bonds at apurinic or apyrimidinic (AP) sites, generating a 3'-hydroxyl group and a 5'-terminal sugar phosphate.</text>
</comment>
<comment type="catalytic activity">
    <reaction evidence="1">
        <text>Endonucleolytic cleavage to 5'-phosphooligonucleotide end-products.</text>
        <dbReference type="EC" id="3.1.21.2"/>
    </reaction>
</comment>
<comment type="cofactor">
    <cofactor evidence="1">
        <name>Zn(2+)</name>
        <dbReference type="ChEBI" id="CHEBI:29105"/>
    </cofactor>
    <text evidence="1">Binds 3 Zn(2+) ions.</text>
</comment>
<comment type="similarity">
    <text evidence="1">Belongs to the AP endonuclease 2 family.</text>
</comment>
<protein>
    <recommendedName>
        <fullName evidence="1">Probable endonuclease 4</fullName>
        <ecNumber evidence="1">3.1.21.2</ecNumber>
    </recommendedName>
    <alternativeName>
        <fullName evidence="1">Endodeoxyribonuclease IV</fullName>
    </alternativeName>
    <alternativeName>
        <fullName evidence="1">Endonuclease IV</fullName>
    </alternativeName>
</protein>
<evidence type="ECO:0000255" key="1">
    <source>
        <dbReference type="HAMAP-Rule" id="MF_00152"/>
    </source>
</evidence>
<gene>
    <name evidence="1" type="primary">nfo</name>
    <name type="ordered locus">ECED1_2608</name>
</gene>
<proteinExistence type="inferred from homology"/>